<feature type="chain" id="PRO_0000285104" description="1-Cys peroxiredoxin PER1">
    <location>
        <begin position="1"/>
        <end position="218"/>
    </location>
</feature>
<feature type="domain" description="Thioredoxin" evidence="5">
    <location>
        <begin position="4"/>
        <end position="164"/>
    </location>
</feature>
<feature type="short sequence motif" description="Bipartite nuclear localization signal" evidence="4">
    <location>
        <begin position="194"/>
        <end position="217"/>
    </location>
</feature>
<feature type="active site" description="Cysteine sulfenic acid (-SOH) intermediate" evidence="3">
    <location>
        <position position="46"/>
    </location>
</feature>
<sequence>MPGLTIGDTVPNLELDSTHGKIRIHDYVGNGYVILFSHPGDFTPVCTTELAAMANYAKEFEKRGVKLLGISCDDVQSHKEWTKDIEAYKPGSKVTYPIMADPDRSAIKQLNMVDPDEKDAEGQLPSRTLHIVGPDKKVKLSFLYPSCTGRNMDEVVRAVDSLLTAAKHKVATPANWNPGECVVIAPGVSDDEAKKMFPQGFETADLPSKKGYLRFTKV</sequence>
<keyword id="KW-0049">Antioxidant</keyword>
<keyword id="KW-0963">Cytoplasm</keyword>
<keyword id="KW-0539">Nucleus</keyword>
<keyword id="KW-0560">Oxidoreductase</keyword>
<keyword id="KW-0575">Peroxidase</keyword>
<keyword id="KW-0676">Redox-active center</keyword>
<keyword id="KW-1185">Reference proteome</keyword>
<proteinExistence type="evidence at transcript level"/>
<evidence type="ECO:0000250" key="1">
    <source>
        <dbReference type="UniProtKB" id="O04005"/>
    </source>
</evidence>
<evidence type="ECO:0000250" key="2">
    <source>
        <dbReference type="UniProtKB" id="O35244"/>
    </source>
</evidence>
<evidence type="ECO:0000250" key="3">
    <source>
        <dbReference type="UniProtKB" id="P30041"/>
    </source>
</evidence>
<evidence type="ECO:0000255" key="4"/>
<evidence type="ECO:0000255" key="5">
    <source>
        <dbReference type="PROSITE-ProRule" id="PRU00691"/>
    </source>
</evidence>
<evidence type="ECO:0000305" key="6"/>
<name>REHY_WHEAT</name>
<protein>
    <recommendedName>
        <fullName>1-Cys peroxiredoxin PER1</fullName>
        <ecNumber evidence="3">1.11.1.24</ecNumber>
    </recommendedName>
    <alternativeName>
        <fullName>Rehydrin homolog</fullName>
    </alternativeName>
    <alternativeName>
        <fullName>Thioredoxin peroxidase</fullName>
    </alternativeName>
    <alternativeName>
        <fullName evidence="6">Thioredoxin-dependent peroxiredoxin</fullName>
    </alternativeName>
</protein>
<comment type="function">
    <text evidence="1 3">Thiol-specific peroxidase that catalyzes the reduction of hydrogen peroxide and organic hydroperoxides to water and alcohols, respectively (By similarity). Seems to contribute to the inhibition of germination during stress (By similarity).</text>
</comment>
<comment type="catalytic activity">
    <reaction evidence="3">
        <text>a hydroperoxide + [thioredoxin]-dithiol = an alcohol + [thioredoxin]-disulfide + H2O</text>
        <dbReference type="Rhea" id="RHEA:62620"/>
        <dbReference type="Rhea" id="RHEA-COMP:10698"/>
        <dbReference type="Rhea" id="RHEA-COMP:10700"/>
        <dbReference type="ChEBI" id="CHEBI:15377"/>
        <dbReference type="ChEBI" id="CHEBI:29950"/>
        <dbReference type="ChEBI" id="CHEBI:30879"/>
        <dbReference type="ChEBI" id="CHEBI:35924"/>
        <dbReference type="ChEBI" id="CHEBI:50058"/>
        <dbReference type="EC" id="1.11.1.24"/>
    </reaction>
</comment>
<comment type="subcellular location">
    <subcellularLocation>
        <location evidence="1">Nucleus</location>
    </subcellularLocation>
    <subcellularLocation>
        <location evidence="1">Cytoplasm</location>
    </subcellularLocation>
</comment>
<comment type="miscellaneous">
    <text evidence="2">The active site is a conserved redox-active cysteine residue, the peroxidatic cysteine (C(P)), which makes the nucleophilic attack on the peroxide substrate. The peroxide oxidizes the C(P)-SH to cysteine sulfenic acid (C(P)-SOH), which then reacts with another cysteine residue, the resolving cysteine (C(R)), to form a disulfide bridge. The disulfide is subsequently reduced by an appropriate electron donor to complete the catalytic cycle. In this 1-Cys peroxiredoxin, no C(R) is present and C(P) instead forms a disulfide with a cysteine from another protein or with a small thiol molecule.</text>
</comment>
<comment type="similarity">
    <text evidence="6">Belongs to the peroxiredoxin family. Prx6 subfamily.</text>
</comment>
<reference key="1">
    <citation type="submission" date="2003-05" db="EMBL/GenBank/DDBJ databases">
        <title>Cloning and expression of PER1 in wheat seed.</title>
        <authorList>
            <person name="Cazalis R."/>
            <person name="Aussenac T."/>
        </authorList>
    </citation>
    <scope>NUCLEOTIDE SEQUENCE [MRNA]</scope>
    <source>
        <strain>cv. Soissons</strain>
        <tissue>Seed</tissue>
    </source>
</reference>
<gene>
    <name type="primary">PER1</name>
</gene>
<accession>Q6W8Q2</accession>
<dbReference type="EC" id="1.11.1.24" evidence="3"/>
<dbReference type="EMBL" id="AY304482">
    <property type="protein sequence ID" value="AAQ74769.1"/>
    <property type="molecule type" value="mRNA"/>
</dbReference>
<dbReference type="SMR" id="Q6W8Q2"/>
<dbReference type="STRING" id="4565.Q6W8Q2"/>
<dbReference type="Allergome" id="6327">
    <property type="allergen name" value="Tri a 32"/>
</dbReference>
<dbReference type="Allergome" id="9499">
    <property type="allergen name" value="Tri a 32.0101"/>
</dbReference>
<dbReference type="PeroxiBase" id="4381">
    <property type="entry name" value="Ta1CysPrx01-2B"/>
</dbReference>
<dbReference type="PaxDb" id="4565-Traes_2BS_CADAA49C9.1"/>
<dbReference type="EnsemblPlants" id="TraesCS2B02G174400.1">
    <property type="protein sequence ID" value="TraesCS2B02G174400.1"/>
    <property type="gene ID" value="TraesCS2B02G174400"/>
</dbReference>
<dbReference type="EnsemblPlants" id="TraesCS2B03G0425700.1">
    <property type="protein sequence ID" value="TraesCS2B03G0425700.1.CDS"/>
    <property type="gene ID" value="TraesCS2B03G0425700"/>
</dbReference>
<dbReference type="EnsemblPlants" id="TraesJUL2B03G00889620.1">
    <property type="protein sequence ID" value="TraesJUL2B03G00889620.1"/>
    <property type="gene ID" value="TraesJUL2B03G00889620"/>
</dbReference>
<dbReference type="EnsemblPlants" id="TraesNOR2B03G00896820.1">
    <property type="protein sequence ID" value="TraesNOR2B03G00896820.1"/>
    <property type="gene ID" value="TraesNOR2B03G00896820"/>
</dbReference>
<dbReference type="EnsemblPlants" id="TraesSTA2B03G00883830.1">
    <property type="protein sequence ID" value="TraesSTA2B03G00883830.1"/>
    <property type="gene ID" value="TraesSTA2B03G00883830"/>
</dbReference>
<dbReference type="EnsemblPlants" id="TraesWEE_scaffold_002158_01G000100.1">
    <property type="protein sequence ID" value="TraesWEE_scaffold_002158_01G000100.1"/>
    <property type="gene ID" value="TraesWEE_scaffold_002158_01G000100"/>
</dbReference>
<dbReference type="Gramene" id="TraesCS2B02G174400.1">
    <property type="protein sequence ID" value="TraesCS2B02G174400.1"/>
    <property type="gene ID" value="TraesCS2B02G174400"/>
</dbReference>
<dbReference type="Gramene" id="TraesCS2B03G0425700.1">
    <property type="protein sequence ID" value="TraesCS2B03G0425700.1.CDS"/>
    <property type="gene ID" value="TraesCS2B03G0425700"/>
</dbReference>
<dbReference type="Gramene" id="TraesJUL2B03G00889620.1">
    <property type="protein sequence ID" value="TraesJUL2B03G00889620.1"/>
    <property type="gene ID" value="TraesJUL2B03G00889620"/>
</dbReference>
<dbReference type="Gramene" id="TraesNOR2B03G00896820.1">
    <property type="protein sequence ID" value="TraesNOR2B03G00896820.1"/>
    <property type="gene ID" value="TraesNOR2B03G00896820"/>
</dbReference>
<dbReference type="Gramene" id="TraesSTA2B03G00883830.1">
    <property type="protein sequence ID" value="TraesSTA2B03G00883830.1"/>
    <property type="gene ID" value="TraesSTA2B03G00883830"/>
</dbReference>
<dbReference type="Gramene" id="TraesWEE_scaffold_002158_01G000100.1">
    <property type="protein sequence ID" value="TraesWEE_scaffold_002158_01G000100.1"/>
    <property type="gene ID" value="TraesWEE_scaffold_002158_01G000100"/>
</dbReference>
<dbReference type="eggNOG" id="KOG0854">
    <property type="taxonomic scope" value="Eukaryota"/>
</dbReference>
<dbReference type="HOGENOM" id="CLU_042529_4_1_1"/>
<dbReference type="OMA" id="RLTMLYP"/>
<dbReference type="OrthoDB" id="2996783at2759"/>
<dbReference type="Proteomes" id="UP000019116">
    <property type="component" value="Chromosome 2B"/>
</dbReference>
<dbReference type="GO" id="GO:0005829">
    <property type="term" value="C:cytosol"/>
    <property type="evidence" value="ECO:0000318"/>
    <property type="project" value="GO_Central"/>
</dbReference>
<dbReference type="GO" id="GO:0005634">
    <property type="term" value="C:nucleus"/>
    <property type="evidence" value="ECO:0007669"/>
    <property type="project" value="UniProtKB-SubCell"/>
</dbReference>
<dbReference type="GO" id="GO:0004601">
    <property type="term" value="F:peroxidase activity"/>
    <property type="evidence" value="ECO:0000318"/>
    <property type="project" value="GO_Central"/>
</dbReference>
<dbReference type="GO" id="GO:0140824">
    <property type="term" value="F:thioredoxin-dependent peroxiredoxin activity"/>
    <property type="evidence" value="ECO:0007669"/>
    <property type="project" value="UniProtKB-EC"/>
</dbReference>
<dbReference type="GO" id="GO:0045454">
    <property type="term" value="P:cell redox homeostasis"/>
    <property type="evidence" value="ECO:0000318"/>
    <property type="project" value="GO_Central"/>
</dbReference>
<dbReference type="CDD" id="cd03016">
    <property type="entry name" value="PRX_1cys"/>
    <property type="match status" value="1"/>
</dbReference>
<dbReference type="FunFam" id="3.30.1020.10:FF:000001">
    <property type="entry name" value="1-Cys peroxiredoxin"/>
    <property type="match status" value="1"/>
</dbReference>
<dbReference type="FunFam" id="3.40.30.10:FF:000011">
    <property type="entry name" value="Peroxiredoxin PRX1"/>
    <property type="match status" value="1"/>
</dbReference>
<dbReference type="Gene3D" id="3.30.1020.10">
    <property type="entry name" value="Antioxidant, Horf6, Chain A, domain2"/>
    <property type="match status" value="1"/>
</dbReference>
<dbReference type="Gene3D" id="3.40.30.10">
    <property type="entry name" value="Glutaredoxin"/>
    <property type="match status" value="1"/>
</dbReference>
<dbReference type="InterPro" id="IPR000866">
    <property type="entry name" value="AhpC/TSA"/>
</dbReference>
<dbReference type="InterPro" id="IPR024706">
    <property type="entry name" value="Peroxiredoxin_AhpC-typ"/>
</dbReference>
<dbReference type="InterPro" id="IPR019479">
    <property type="entry name" value="Peroxiredoxin_C"/>
</dbReference>
<dbReference type="InterPro" id="IPR045020">
    <property type="entry name" value="PRX_1cys"/>
</dbReference>
<dbReference type="InterPro" id="IPR036249">
    <property type="entry name" value="Thioredoxin-like_sf"/>
</dbReference>
<dbReference type="InterPro" id="IPR013766">
    <property type="entry name" value="Thioredoxin_domain"/>
</dbReference>
<dbReference type="PANTHER" id="PTHR43503">
    <property type="entry name" value="MCG48959-RELATED"/>
    <property type="match status" value="1"/>
</dbReference>
<dbReference type="PANTHER" id="PTHR43503:SF4">
    <property type="entry name" value="PEROXIREDOXIN-6"/>
    <property type="match status" value="1"/>
</dbReference>
<dbReference type="Pfam" id="PF10417">
    <property type="entry name" value="1-cysPrx_C"/>
    <property type="match status" value="1"/>
</dbReference>
<dbReference type="Pfam" id="PF00578">
    <property type="entry name" value="AhpC-TSA"/>
    <property type="match status" value="1"/>
</dbReference>
<dbReference type="PIRSF" id="PIRSF000239">
    <property type="entry name" value="AHPC"/>
    <property type="match status" value="1"/>
</dbReference>
<dbReference type="SUPFAM" id="SSF52833">
    <property type="entry name" value="Thioredoxin-like"/>
    <property type="match status" value="1"/>
</dbReference>
<dbReference type="PROSITE" id="PS51352">
    <property type="entry name" value="THIOREDOXIN_2"/>
    <property type="match status" value="1"/>
</dbReference>
<organism>
    <name type="scientific">Triticum aestivum</name>
    <name type="common">Wheat</name>
    <dbReference type="NCBI Taxonomy" id="4565"/>
    <lineage>
        <taxon>Eukaryota</taxon>
        <taxon>Viridiplantae</taxon>
        <taxon>Streptophyta</taxon>
        <taxon>Embryophyta</taxon>
        <taxon>Tracheophyta</taxon>
        <taxon>Spermatophyta</taxon>
        <taxon>Magnoliopsida</taxon>
        <taxon>Liliopsida</taxon>
        <taxon>Poales</taxon>
        <taxon>Poaceae</taxon>
        <taxon>BOP clade</taxon>
        <taxon>Pooideae</taxon>
        <taxon>Triticodae</taxon>
        <taxon>Triticeae</taxon>
        <taxon>Triticinae</taxon>
        <taxon>Triticum</taxon>
    </lineage>
</organism>